<accession>Q6Z2T9</accession>
<accession>Q0DXM1</accession>
<accession>Q0DXM2</accession>
<accession>Q8W1N1</accession>
<accession>Q944E6</accession>
<gene>
    <name evidence="3" type="primary">CSLA6</name>
    <name type="ordered locus">Os02g0744600/Os02g0744650</name>
    <name type="ordered locus">Os02g0744500</name>
    <name type="ordered locus">LOC_Os02g51060</name>
    <name type="ORF">OJ1118_G04.6</name>
    <name type="ORF">OJ1734_E02.33</name>
</gene>
<keyword id="KW-0961">Cell wall biogenesis/degradation</keyword>
<keyword id="KW-0328">Glycosyltransferase</keyword>
<keyword id="KW-0333">Golgi apparatus</keyword>
<keyword id="KW-0472">Membrane</keyword>
<keyword id="KW-1185">Reference proteome</keyword>
<keyword id="KW-0808">Transferase</keyword>
<keyword id="KW-0812">Transmembrane</keyword>
<keyword id="KW-1133">Transmembrane helix</keyword>
<reference key="1">
    <citation type="journal article" date="2002" name="Plant Physiol.">
        <title>Cellulose synthase-like genes of rice.</title>
        <authorList>
            <person name="Hazen S.P."/>
            <person name="Scott-Craig J.S."/>
            <person name="Walton J.D."/>
        </authorList>
    </citation>
    <scope>NUCLEOTIDE SEQUENCE [GENOMIC DNA]</scope>
    <scope>NUCLEOTIDE SEQUENCE [MRNA] OF 464-574</scope>
    <scope>GENE FAMILY</scope>
    <scope>NOMENCLATURE</scope>
</reference>
<reference key="2">
    <citation type="journal article" date="2005" name="Nature">
        <title>The map-based sequence of the rice genome.</title>
        <authorList>
            <consortium name="International rice genome sequencing project (IRGSP)"/>
        </authorList>
    </citation>
    <scope>NUCLEOTIDE SEQUENCE [LARGE SCALE GENOMIC DNA]</scope>
    <source>
        <strain>cv. Nipponbare</strain>
    </source>
</reference>
<reference key="3">
    <citation type="journal article" date="2008" name="Nucleic Acids Res.">
        <title>The rice annotation project database (RAP-DB): 2008 update.</title>
        <authorList>
            <consortium name="The rice annotation project (RAP)"/>
        </authorList>
    </citation>
    <scope>GENOME REANNOTATION</scope>
    <source>
        <strain>cv. Nipponbare</strain>
    </source>
</reference>
<reference key="4">
    <citation type="journal article" date="2013" name="Rice">
        <title>Improvement of the Oryza sativa Nipponbare reference genome using next generation sequence and optical map data.</title>
        <authorList>
            <person name="Kawahara Y."/>
            <person name="de la Bastide M."/>
            <person name="Hamilton J.P."/>
            <person name="Kanamori H."/>
            <person name="McCombie W.R."/>
            <person name="Ouyang S."/>
            <person name="Schwartz D.C."/>
            <person name="Tanaka T."/>
            <person name="Wu J."/>
            <person name="Zhou S."/>
            <person name="Childs K.L."/>
            <person name="Davidson R.M."/>
            <person name="Lin H."/>
            <person name="Quesada-Ocampo L."/>
            <person name="Vaillancourt B."/>
            <person name="Sakai H."/>
            <person name="Lee S.S."/>
            <person name="Kim J."/>
            <person name="Numa H."/>
            <person name="Itoh T."/>
            <person name="Buell C.R."/>
            <person name="Matsumoto T."/>
        </authorList>
    </citation>
    <scope>GENOME REANNOTATION</scope>
    <source>
        <strain>cv. Nipponbare</strain>
    </source>
</reference>
<protein>
    <recommendedName>
        <fullName evidence="4">Probable glucomannan 4-beta-mannosyltransferase 6</fullName>
        <ecNumber evidence="1">2.4.1.32</ecNumber>
    </recommendedName>
    <alternativeName>
        <fullName evidence="3">Cellulose synthase-like protein A6</fullName>
        <shortName evidence="3">OsCslA6</shortName>
    </alternativeName>
    <alternativeName>
        <fullName evidence="4">Glucomannan synthase</fullName>
    </alternativeName>
    <alternativeName>
        <fullName evidence="4">Mannan synthase 6</fullName>
    </alternativeName>
</protein>
<proteinExistence type="evidence at transcript level"/>
<sequence length="574" mass="65561">MQGSSTSILHFVPSDPTSTSVLDFLSPTPRGTSPVHDRRLHAGDLALRAGGDRLLVADTVAAVVESLVQAWRQVRMELLVPLLRGAVVACMVMSVIVLAEKVFLGVVSAVVKLLRRRPARLYRCDPVVVEDDDEAGRASFPMVLVQIPMYNEKEVYQLSIGAACRLTWPADRLIVQVLDDSTDAIVKELVRKECERWGKKGINVKYETRKDRAGYKAGNLREGMRRGYVQGCEFVAMLDADFQPPPDFLLKTVPFLVHNPRLALVQTRWEFVNANDCLLTRMQEMSMDYHFKVEQEAGSSLCNFFGYNGTAGVWRRQVIDESGGWEDRTTAEDMDLALRAGLLGWEFVYVGSIKVKSELPSTLKAYRSQQHRWSCGPALLFKKMFWEILAAKKVSFWKKLYMTYDFFIARRIISTFFTFFFFSVLLPMKVFFPEVQIPLWELILIPTAIILLHSVGTPRSIHLIILWFLFENVMALHRLKATLIGFFEAGRANEWIVTQKLGNIQKLKSIVRVTKNCRFKDRFHCLELFIGGFLLTSACYDYLYRDDIFYIFLLSQSIIYFAIGFEFMGVSVSS</sequence>
<evidence type="ECO:0000250" key="1">
    <source>
        <dbReference type="UniProtKB" id="Q7PC76"/>
    </source>
</evidence>
<evidence type="ECO:0000255" key="2"/>
<evidence type="ECO:0000303" key="3">
    <source>
    </source>
</evidence>
<evidence type="ECO:0000305" key="4"/>
<comment type="function">
    <text evidence="1">Probable mannan synthase which consists of a 4-beta-mannosyltransferase activity on mannan using GDP-mannose. The beta-1,4-mannan product is the backbone for galactomannan synthesis by galactomannan galactosyltransferase. Galactomannan is a noncellulosic polysaccharides of plant cell wall.</text>
</comment>
<comment type="catalytic activity">
    <reaction evidence="1">
        <text>GDP-mannose + (glucomannan)n = GDP + (glucomannan)n+1.</text>
        <dbReference type="EC" id="2.4.1.32"/>
    </reaction>
</comment>
<comment type="subcellular location">
    <subcellularLocation>
        <location evidence="4">Golgi apparatus membrane</location>
        <topology evidence="4">Multi-pass membrane protein</topology>
    </subcellularLocation>
</comment>
<comment type="similarity">
    <text evidence="4">Belongs to the glycosyltransferase 2 family. Plant cellulose synthase-like A subfamily.</text>
</comment>
<comment type="sequence caution" evidence="4">
    <conflict type="erroneous gene model prediction">
        <sequence resource="EMBL-CDS" id="BAD15538"/>
    </conflict>
</comment>
<comment type="sequence caution" evidence="4">
    <conflict type="erroneous gene model prediction">
        <sequence resource="EMBL-CDS" id="BAD16122"/>
    </conflict>
</comment>
<comment type="sequence caution" evidence="4">
    <conflict type="erroneous gene model prediction">
        <sequence resource="EMBL-CDS" id="BAF10017"/>
    </conflict>
</comment>
<name>CSLA6_ORYSJ</name>
<dbReference type="EC" id="2.4.1.32" evidence="1"/>
<dbReference type="EMBL" id="AF432498">
    <property type="protein sequence ID" value="AAL25127.1"/>
    <property type="molecule type" value="Genomic_DNA"/>
</dbReference>
<dbReference type="EMBL" id="AF435648">
    <property type="protein sequence ID" value="AAL38533.1"/>
    <property type="molecule type" value="mRNA"/>
</dbReference>
<dbReference type="EMBL" id="AP004114">
    <property type="protein sequence ID" value="BAD15538.1"/>
    <property type="status" value="ALT_SEQ"/>
    <property type="molecule type" value="Genomic_DNA"/>
</dbReference>
<dbReference type="EMBL" id="AP005297">
    <property type="protein sequence ID" value="BAD16122.1"/>
    <property type="status" value="ALT_SEQ"/>
    <property type="molecule type" value="Genomic_DNA"/>
</dbReference>
<dbReference type="EMBL" id="AP008208">
    <property type="protein sequence ID" value="BAF10017.1"/>
    <property type="status" value="ALT_SEQ"/>
    <property type="molecule type" value="Genomic_DNA"/>
</dbReference>
<dbReference type="EMBL" id="AP014958">
    <property type="status" value="NOT_ANNOTATED_CDS"/>
    <property type="molecule type" value="Genomic_DNA"/>
</dbReference>
<dbReference type="SMR" id="Q6Z2T9"/>
<dbReference type="FunCoup" id="Q6Z2T9">
    <property type="interactions" value="16"/>
</dbReference>
<dbReference type="STRING" id="39947.Q6Z2T9"/>
<dbReference type="CAZy" id="GT2">
    <property type="family name" value="Glycosyltransferase Family 2"/>
</dbReference>
<dbReference type="PaxDb" id="39947-Q6Z2T9"/>
<dbReference type="KEGG" id="dosa:Os02g0744600"/>
<dbReference type="eggNOG" id="ENOG502QR7J">
    <property type="taxonomic scope" value="Eukaryota"/>
</dbReference>
<dbReference type="InParanoid" id="Q6Z2T9"/>
<dbReference type="PlantReactome" id="R-OSA-1119573">
    <property type="pathway name" value="Dolichyl-diphosphooligosaccharide biosynthesis"/>
</dbReference>
<dbReference type="Proteomes" id="UP000000763">
    <property type="component" value="Chromosome 2"/>
</dbReference>
<dbReference type="Proteomes" id="UP000059680">
    <property type="component" value="Chromosome 2"/>
</dbReference>
<dbReference type="GO" id="GO:0005794">
    <property type="term" value="C:Golgi apparatus"/>
    <property type="evidence" value="ECO:0000318"/>
    <property type="project" value="GO_Central"/>
</dbReference>
<dbReference type="GO" id="GO:0000139">
    <property type="term" value="C:Golgi membrane"/>
    <property type="evidence" value="ECO:0007669"/>
    <property type="project" value="UniProtKB-SubCell"/>
</dbReference>
<dbReference type="GO" id="GO:0047259">
    <property type="term" value="F:glucomannan 4-beta-mannosyltransferase activity"/>
    <property type="evidence" value="ECO:0007669"/>
    <property type="project" value="UniProtKB-EC"/>
</dbReference>
<dbReference type="GO" id="GO:0051753">
    <property type="term" value="F:mannan synthase activity"/>
    <property type="evidence" value="ECO:0000318"/>
    <property type="project" value="GO_Central"/>
</dbReference>
<dbReference type="GO" id="GO:0071555">
    <property type="term" value="P:cell wall organization"/>
    <property type="evidence" value="ECO:0007669"/>
    <property type="project" value="UniProtKB-KW"/>
</dbReference>
<dbReference type="CDD" id="cd06437">
    <property type="entry name" value="CESA_CaSu_A2"/>
    <property type="match status" value="1"/>
</dbReference>
<dbReference type="FunFam" id="3.90.550.10:FF:000057">
    <property type="entry name" value="Glycosyltransferase-like protein, family 2"/>
    <property type="match status" value="1"/>
</dbReference>
<dbReference type="Gene3D" id="3.90.550.10">
    <property type="entry name" value="Spore Coat Polysaccharide Biosynthesis Protein SpsA, Chain A"/>
    <property type="match status" value="1"/>
</dbReference>
<dbReference type="InterPro" id="IPR001173">
    <property type="entry name" value="Glyco_trans_2-like"/>
</dbReference>
<dbReference type="InterPro" id="IPR029044">
    <property type="entry name" value="Nucleotide-diphossugar_trans"/>
</dbReference>
<dbReference type="PANTHER" id="PTHR32044:SF18">
    <property type="entry name" value="GLUCOMANNAN 4-BETA-MANNOSYLTRANSFERASE 6-RELATED"/>
    <property type="match status" value="1"/>
</dbReference>
<dbReference type="PANTHER" id="PTHR32044">
    <property type="entry name" value="GLUCOMANNAN 4-BETA-MANNOSYLTRANSFERASE 9"/>
    <property type="match status" value="1"/>
</dbReference>
<dbReference type="Pfam" id="PF13632">
    <property type="entry name" value="Glyco_trans_2_3"/>
    <property type="match status" value="1"/>
</dbReference>
<dbReference type="SUPFAM" id="SSF53448">
    <property type="entry name" value="Nucleotide-diphospho-sugar transferases"/>
    <property type="match status" value="1"/>
</dbReference>
<organism>
    <name type="scientific">Oryza sativa subsp. japonica</name>
    <name type="common">Rice</name>
    <dbReference type="NCBI Taxonomy" id="39947"/>
    <lineage>
        <taxon>Eukaryota</taxon>
        <taxon>Viridiplantae</taxon>
        <taxon>Streptophyta</taxon>
        <taxon>Embryophyta</taxon>
        <taxon>Tracheophyta</taxon>
        <taxon>Spermatophyta</taxon>
        <taxon>Magnoliopsida</taxon>
        <taxon>Liliopsida</taxon>
        <taxon>Poales</taxon>
        <taxon>Poaceae</taxon>
        <taxon>BOP clade</taxon>
        <taxon>Oryzoideae</taxon>
        <taxon>Oryzeae</taxon>
        <taxon>Oryzinae</taxon>
        <taxon>Oryza</taxon>
        <taxon>Oryza sativa</taxon>
    </lineage>
</organism>
<feature type="chain" id="PRO_0000319377" description="Probable glucomannan 4-beta-mannosyltransferase 6">
    <location>
        <begin position="1"/>
        <end position="574"/>
    </location>
</feature>
<feature type="transmembrane region" description="Helical" evidence="2">
    <location>
        <begin position="87"/>
        <end position="107"/>
    </location>
</feature>
<feature type="transmembrane region" description="Helical" evidence="2">
    <location>
        <begin position="412"/>
        <end position="432"/>
    </location>
</feature>
<feature type="transmembrane region" description="Helical" evidence="2">
    <location>
        <begin position="437"/>
        <end position="457"/>
    </location>
</feature>
<feature type="transmembrane region" description="Helical" evidence="2">
    <location>
        <begin position="523"/>
        <end position="543"/>
    </location>
</feature>
<feature type="transmembrane region" description="Helical" evidence="2">
    <location>
        <begin position="548"/>
        <end position="568"/>
    </location>
</feature>
<feature type="active site" evidence="2">
    <location>
        <position position="180"/>
    </location>
</feature>
<feature type="active site" evidence="2">
    <location>
        <position position="333"/>
    </location>
</feature>
<feature type="binding site" evidence="2">
    <location>
        <position position="239"/>
    </location>
    <ligand>
        <name>substrate</name>
    </ligand>
</feature>
<feature type="binding site" evidence="2">
    <location>
        <position position="241"/>
    </location>
    <ligand>
        <name>substrate</name>
    </ligand>
</feature>